<organism>
    <name type="scientific">Cellvibrio japonicus (strain Ueda107)</name>
    <name type="common">Pseudomonas fluorescens subsp. cellulosa</name>
    <dbReference type="NCBI Taxonomy" id="498211"/>
    <lineage>
        <taxon>Bacteria</taxon>
        <taxon>Pseudomonadati</taxon>
        <taxon>Pseudomonadota</taxon>
        <taxon>Gammaproteobacteria</taxon>
        <taxon>Cellvibrionales</taxon>
        <taxon>Cellvibrionaceae</taxon>
        <taxon>Cellvibrio</taxon>
    </lineage>
</organism>
<gene>
    <name type="ordered locus">CJA_0091</name>
</gene>
<comment type="similarity">
    <text evidence="1">Belongs to the UPF0235 family.</text>
</comment>
<accession>B3PFH5</accession>
<protein>
    <recommendedName>
        <fullName evidence="1">UPF0235 protein CJA_0091</fullName>
    </recommendedName>
</protein>
<proteinExistence type="inferred from homology"/>
<sequence length="101" mass="11373">MVGQAGHYRWQGEDLILHCQLQPKASGDDIVGVHGDRLKIRITAPPVDGKANEYLIKWLSKQFRVPKGNIKILQGELGRHKTLGIHAPRHLPEEAHICFPK</sequence>
<feature type="chain" id="PRO_1000130671" description="UPF0235 protein CJA_0091">
    <location>
        <begin position="1"/>
        <end position="101"/>
    </location>
</feature>
<reference key="1">
    <citation type="journal article" date="2008" name="J. Bacteriol.">
        <title>Insights into plant cell wall degradation from the genome sequence of the soil bacterium Cellvibrio japonicus.</title>
        <authorList>
            <person name="DeBoy R.T."/>
            <person name="Mongodin E.F."/>
            <person name="Fouts D.E."/>
            <person name="Tailford L.E."/>
            <person name="Khouri H."/>
            <person name="Emerson J.B."/>
            <person name="Mohamoud Y."/>
            <person name="Watkins K."/>
            <person name="Henrissat B."/>
            <person name="Gilbert H.J."/>
            <person name="Nelson K.E."/>
        </authorList>
    </citation>
    <scope>NUCLEOTIDE SEQUENCE [LARGE SCALE GENOMIC DNA]</scope>
    <source>
        <strain>Ueda107</strain>
    </source>
</reference>
<evidence type="ECO:0000255" key="1">
    <source>
        <dbReference type="HAMAP-Rule" id="MF_00634"/>
    </source>
</evidence>
<name>Y091_CELJU</name>
<dbReference type="EMBL" id="CP000934">
    <property type="protein sequence ID" value="ACE85887.1"/>
    <property type="molecule type" value="Genomic_DNA"/>
</dbReference>
<dbReference type="RefSeq" id="WP_012485774.1">
    <property type="nucleotide sequence ID" value="NC_010995.1"/>
</dbReference>
<dbReference type="SMR" id="B3PFH5"/>
<dbReference type="STRING" id="498211.CJA_0091"/>
<dbReference type="KEGG" id="cja:CJA_0091"/>
<dbReference type="eggNOG" id="COG1872">
    <property type="taxonomic scope" value="Bacteria"/>
</dbReference>
<dbReference type="HOGENOM" id="CLU_130694_5_0_6"/>
<dbReference type="OrthoDB" id="9800587at2"/>
<dbReference type="Proteomes" id="UP000001036">
    <property type="component" value="Chromosome"/>
</dbReference>
<dbReference type="GO" id="GO:0005737">
    <property type="term" value="C:cytoplasm"/>
    <property type="evidence" value="ECO:0007669"/>
    <property type="project" value="TreeGrafter"/>
</dbReference>
<dbReference type="Gene3D" id="3.30.1200.10">
    <property type="entry name" value="YggU-like"/>
    <property type="match status" value="1"/>
</dbReference>
<dbReference type="HAMAP" id="MF_00634">
    <property type="entry name" value="UPF0235"/>
    <property type="match status" value="1"/>
</dbReference>
<dbReference type="InterPro" id="IPR003746">
    <property type="entry name" value="DUF167"/>
</dbReference>
<dbReference type="InterPro" id="IPR036591">
    <property type="entry name" value="YggU-like_sf"/>
</dbReference>
<dbReference type="NCBIfam" id="TIGR00251">
    <property type="entry name" value="DUF167 family protein"/>
    <property type="match status" value="1"/>
</dbReference>
<dbReference type="PANTHER" id="PTHR13420">
    <property type="entry name" value="UPF0235 PROTEIN C15ORF40"/>
    <property type="match status" value="1"/>
</dbReference>
<dbReference type="PANTHER" id="PTHR13420:SF7">
    <property type="entry name" value="UPF0235 PROTEIN C15ORF40"/>
    <property type="match status" value="1"/>
</dbReference>
<dbReference type="Pfam" id="PF02594">
    <property type="entry name" value="DUF167"/>
    <property type="match status" value="1"/>
</dbReference>
<dbReference type="SMART" id="SM01152">
    <property type="entry name" value="DUF167"/>
    <property type="match status" value="1"/>
</dbReference>
<dbReference type="SUPFAM" id="SSF69786">
    <property type="entry name" value="YggU-like"/>
    <property type="match status" value="1"/>
</dbReference>
<keyword id="KW-1185">Reference proteome</keyword>